<comment type="function">
    <text evidence="1">Hydrolyzes ureidoacrylate to form aminoacrylate and carbamate. The carbamate hydrolyzes spontaneously, thereby releasing one of the nitrogen atoms of the pyrimidine ring as ammonia and one of its carbon atoms as CO2.</text>
</comment>
<comment type="catalytic activity">
    <reaction evidence="1">
        <text>(Z)-3-ureidoacrylate + H2O + H(+) = (Z)-3-aminoacrylate + NH4(+) + CO2</text>
        <dbReference type="Rhea" id="RHEA:42624"/>
        <dbReference type="ChEBI" id="CHEBI:15377"/>
        <dbReference type="ChEBI" id="CHEBI:15378"/>
        <dbReference type="ChEBI" id="CHEBI:16526"/>
        <dbReference type="ChEBI" id="CHEBI:28938"/>
        <dbReference type="ChEBI" id="CHEBI:59891"/>
        <dbReference type="ChEBI" id="CHEBI:59894"/>
        <dbReference type="EC" id="3.5.1.110"/>
    </reaction>
</comment>
<comment type="catalytic activity">
    <reaction evidence="1">
        <text>(Z)-3-ureidoacrylate + H2O = (Z)-3-aminoacrylate + carbamate + H(+)</text>
        <dbReference type="Rhea" id="RHEA:31603"/>
        <dbReference type="ChEBI" id="CHEBI:13941"/>
        <dbReference type="ChEBI" id="CHEBI:15377"/>
        <dbReference type="ChEBI" id="CHEBI:15378"/>
        <dbReference type="ChEBI" id="CHEBI:59891"/>
        <dbReference type="ChEBI" id="CHEBI:59894"/>
    </reaction>
</comment>
<comment type="catalytic activity">
    <reaction evidence="1">
        <text>(Z)-2-methylureidoacrylate + H2O + H(+) = (Z)-2-methylaminoacrylate + NH4(+) + CO2</text>
        <dbReference type="Rhea" id="RHEA:42620"/>
        <dbReference type="ChEBI" id="CHEBI:15377"/>
        <dbReference type="ChEBI" id="CHEBI:15378"/>
        <dbReference type="ChEBI" id="CHEBI:16526"/>
        <dbReference type="ChEBI" id="CHEBI:28938"/>
        <dbReference type="ChEBI" id="CHEBI:143783"/>
        <dbReference type="ChEBI" id="CHEBI:145735"/>
        <dbReference type="EC" id="3.5.1.110"/>
    </reaction>
</comment>
<comment type="similarity">
    <text evidence="1 2">Belongs to the isochorismatase family. RutB subfamily.</text>
</comment>
<comment type="sequence caution" evidence="2">
    <conflict type="erroneous initiation">
        <sequence resource="EMBL-CDS" id="AAK88231"/>
    </conflict>
    <text>Extended N-terminus.</text>
</comment>
<proteinExistence type="inferred from homology"/>
<sequence>MTLPARPEPITLKPSETAVVVVDMQNAYSTEGGYVDLAGFDISGAKGTIANIKKTLDAARAAGVQVIYFQNGWDKDYVEAGGPGSPNWHKSNALKTMRKRPELQGQLLAKGTWDYAIVDELQPQPGDILVPKTRYSGFFNTNMDSVLRARGIRNLVFVGIATNVCVESSLRDAFHLEYFGVMLEDATHHLGPDFIQQATVYNVEKFFGWVATVNDFCGVISQAAPVTD</sequence>
<evidence type="ECO:0000255" key="1">
    <source>
        <dbReference type="HAMAP-Rule" id="MF_00830"/>
    </source>
</evidence>
<evidence type="ECO:0000305" key="2"/>
<dbReference type="EC" id="3.5.1.110" evidence="1"/>
<dbReference type="EMBL" id="AE007869">
    <property type="protein sequence ID" value="AAK88231.1"/>
    <property type="status" value="ALT_INIT"/>
    <property type="molecule type" value="Genomic_DNA"/>
</dbReference>
<dbReference type="PIR" id="AH2883">
    <property type="entry name" value="AH2883"/>
</dbReference>
<dbReference type="PIR" id="F97659">
    <property type="entry name" value="F97659"/>
</dbReference>
<dbReference type="RefSeq" id="NP_355446.1">
    <property type="nucleotide sequence ID" value="NC_003062.2"/>
</dbReference>
<dbReference type="RefSeq" id="WP_004443492.1">
    <property type="nucleotide sequence ID" value="NC_003062.2"/>
</dbReference>
<dbReference type="SMR" id="P58760"/>
<dbReference type="STRING" id="176299.Atu2499"/>
<dbReference type="EnsemblBacteria" id="AAK88231">
    <property type="protein sequence ID" value="AAK88231"/>
    <property type="gene ID" value="Atu2499"/>
</dbReference>
<dbReference type="GeneID" id="92921943"/>
<dbReference type="KEGG" id="atu:Atu2499"/>
<dbReference type="PATRIC" id="fig|176299.10.peg.2511"/>
<dbReference type="eggNOG" id="COG1335">
    <property type="taxonomic scope" value="Bacteria"/>
</dbReference>
<dbReference type="HOGENOM" id="CLU_068979_8_0_5"/>
<dbReference type="OrthoDB" id="9807387at2"/>
<dbReference type="Proteomes" id="UP000000813">
    <property type="component" value="Chromosome circular"/>
</dbReference>
<dbReference type="GO" id="GO:0016811">
    <property type="term" value="F:hydrolase activity, acting on carbon-nitrogen (but not peptide) bonds, in linear amides"/>
    <property type="evidence" value="ECO:0007669"/>
    <property type="project" value="UniProtKB-UniRule"/>
</dbReference>
<dbReference type="GO" id="GO:0019740">
    <property type="term" value="P:nitrogen utilization"/>
    <property type="evidence" value="ECO:0007669"/>
    <property type="project" value="UniProtKB-UniRule"/>
</dbReference>
<dbReference type="GO" id="GO:0006212">
    <property type="term" value="P:uracil catabolic process"/>
    <property type="evidence" value="ECO:0007669"/>
    <property type="project" value="UniProtKB-UniRule"/>
</dbReference>
<dbReference type="CDD" id="cd00431">
    <property type="entry name" value="cysteine_hydrolases"/>
    <property type="match status" value="1"/>
</dbReference>
<dbReference type="Gene3D" id="3.40.50.850">
    <property type="entry name" value="Isochorismatase-like"/>
    <property type="match status" value="1"/>
</dbReference>
<dbReference type="HAMAP" id="MF_00830">
    <property type="entry name" value="RutB"/>
    <property type="match status" value="1"/>
</dbReference>
<dbReference type="InterPro" id="IPR000868">
    <property type="entry name" value="Isochorismatase-like_dom"/>
</dbReference>
<dbReference type="InterPro" id="IPR050272">
    <property type="entry name" value="Isochorismatase-like_hydrls"/>
</dbReference>
<dbReference type="InterPro" id="IPR036380">
    <property type="entry name" value="Isochorismatase-like_sf"/>
</dbReference>
<dbReference type="InterPro" id="IPR019916">
    <property type="entry name" value="RutB"/>
</dbReference>
<dbReference type="NCBIfam" id="TIGR03614">
    <property type="entry name" value="RutB"/>
    <property type="match status" value="1"/>
</dbReference>
<dbReference type="PANTHER" id="PTHR43540:SF6">
    <property type="entry name" value="ISOCHORISMATASE-LIKE DOMAIN-CONTAINING PROTEIN"/>
    <property type="match status" value="1"/>
</dbReference>
<dbReference type="PANTHER" id="PTHR43540">
    <property type="entry name" value="PEROXYUREIDOACRYLATE/UREIDOACRYLATE AMIDOHYDROLASE-RELATED"/>
    <property type="match status" value="1"/>
</dbReference>
<dbReference type="Pfam" id="PF00857">
    <property type="entry name" value="Isochorismatase"/>
    <property type="match status" value="1"/>
</dbReference>
<dbReference type="SUPFAM" id="SSF52499">
    <property type="entry name" value="Isochorismatase-like hydrolases"/>
    <property type="match status" value="1"/>
</dbReference>
<organism>
    <name type="scientific">Agrobacterium fabrum (strain C58 / ATCC 33970)</name>
    <name type="common">Agrobacterium tumefaciens (strain C58)</name>
    <dbReference type="NCBI Taxonomy" id="176299"/>
    <lineage>
        <taxon>Bacteria</taxon>
        <taxon>Pseudomonadati</taxon>
        <taxon>Pseudomonadota</taxon>
        <taxon>Alphaproteobacteria</taxon>
        <taxon>Hyphomicrobiales</taxon>
        <taxon>Rhizobiaceae</taxon>
        <taxon>Rhizobium/Agrobacterium group</taxon>
        <taxon>Agrobacterium</taxon>
        <taxon>Agrobacterium tumefaciens complex</taxon>
    </lineage>
</organism>
<keyword id="KW-0378">Hydrolase</keyword>
<keyword id="KW-1185">Reference proteome</keyword>
<protein>
    <recommendedName>
        <fullName evidence="1">Ureidoacrylate amidohydrolase RutB</fullName>
        <ecNumber evidence="1">3.5.1.110</ecNumber>
    </recommendedName>
</protein>
<reference key="1">
    <citation type="journal article" date="2001" name="Science">
        <title>The genome of the natural genetic engineer Agrobacterium tumefaciens C58.</title>
        <authorList>
            <person name="Wood D.W."/>
            <person name="Setubal J.C."/>
            <person name="Kaul R."/>
            <person name="Monks D.E."/>
            <person name="Kitajima J.P."/>
            <person name="Okura V.K."/>
            <person name="Zhou Y."/>
            <person name="Chen L."/>
            <person name="Wood G.E."/>
            <person name="Almeida N.F. Jr."/>
            <person name="Woo L."/>
            <person name="Chen Y."/>
            <person name="Paulsen I.T."/>
            <person name="Eisen J.A."/>
            <person name="Karp P.D."/>
            <person name="Bovee D. Sr."/>
            <person name="Chapman P."/>
            <person name="Clendenning J."/>
            <person name="Deatherage G."/>
            <person name="Gillet W."/>
            <person name="Grant C."/>
            <person name="Kutyavin T."/>
            <person name="Levy R."/>
            <person name="Li M.-J."/>
            <person name="McClelland E."/>
            <person name="Palmieri A."/>
            <person name="Raymond C."/>
            <person name="Rouse G."/>
            <person name="Saenphimmachak C."/>
            <person name="Wu Z."/>
            <person name="Romero P."/>
            <person name="Gordon D."/>
            <person name="Zhang S."/>
            <person name="Yoo H."/>
            <person name="Tao Y."/>
            <person name="Biddle P."/>
            <person name="Jung M."/>
            <person name="Krespan W."/>
            <person name="Perry M."/>
            <person name="Gordon-Kamm B."/>
            <person name="Liao L."/>
            <person name="Kim S."/>
            <person name="Hendrick C."/>
            <person name="Zhao Z.-Y."/>
            <person name="Dolan M."/>
            <person name="Chumley F."/>
            <person name="Tingey S.V."/>
            <person name="Tomb J.-F."/>
            <person name="Gordon M.P."/>
            <person name="Olson M.V."/>
            <person name="Nester E.W."/>
        </authorList>
    </citation>
    <scope>NUCLEOTIDE SEQUENCE [LARGE SCALE GENOMIC DNA]</scope>
    <source>
        <strain>C58 / ATCC 33970</strain>
    </source>
</reference>
<reference key="2">
    <citation type="journal article" date="2001" name="Science">
        <title>Genome sequence of the plant pathogen and biotechnology agent Agrobacterium tumefaciens C58.</title>
        <authorList>
            <person name="Goodner B."/>
            <person name="Hinkle G."/>
            <person name="Gattung S."/>
            <person name="Miller N."/>
            <person name="Blanchard M."/>
            <person name="Qurollo B."/>
            <person name="Goldman B.S."/>
            <person name="Cao Y."/>
            <person name="Askenazi M."/>
            <person name="Halling C."/>
            <person name="Mullin L."/>
            <person name="Houmiel K."/>
            <person name="Gordon J."/>
            <person name="Vaudin M."/>
            <person name="Iartchouk O."/>
            <person name="Epp A."/>
            <person name="Liu F."/>
            <person name="Wollam C."/>
            <person name="Allinger M."/>
            <person name="Doughty D."/>
            <person name="Scott C."/>
            <person name="Lappas C."/>
            <person name="Markelz B."/>
            <person name="Flanagan C."/>
            <person name="Crowell C."/>
            <person name="Gurson J."/>
            <person name="Lomo C."/>
            <person name="Sear C."/>
            <person name="Strub G."/>
            <person name="Cielo C."/>
            <person name="Slater S."/>
        </authorList>
    </citation>
    <scope>NUCLEOTIDE SEQUENCE [LARGE SCALE GENOMIC DNA]</scope>
    <source>
        <strain>C58 / ATCC 33970</strain>
    </source>
</reference>
<feature type="chain" id="PRO_0000201835" description="Ureidoacrylate amidohydrolase RutB">
    <location>
        <begin position="1"/>
        <end position="228"/>
    </location>
</feature>
<feature type="active site" description="Proton acceptor" evidence="1">
    <location>
        <position position="23"/>
    </location>
</feature>
<feature type="active site" evidence="1">
    <location>
        <position position="132"/>
    </location>
</feature>
<feature type="active site" description="Nucleophile" evidence="1">
    <location>
        <position position="165"/>
    </location>
</feature>
<name>RUTB_AGRFC</name>
<gene>
    <name evidence="1" type="primary">rutB</name>
    <name type="ordered locus">Atu2499</name>
    <name type="ORF">AGR_C_4541</name>
</gene>
<accession>P58760</accession>